<proteinExistence type="evidence at protein level"/>
<sequence length="209" mass="23188">MKTSKWIDISQPLNNDIATWPGDTPFSYEVLWSKEESGSVNVGKLTMSIHTGTHIDAPFHFDNDGKKVLDLDIQVYVGPTRIIDVSNLESIGKKELEKFHLEGVERLLLRTSSHGKANEFPDIIPHLRADIAPFLSEKGIRLIGVDVPSVDPLDDKELAAHHQLFKHSIHILENVVLDHVADGDYELIALPLALSDADGSPVRAVIRPI</sequence>
<dbReference type="EC" id="3.5.1.9" evidence="1 2"/>
<dbReference type="EMBL" id="AE016879">
    <property type="protein sequence ID" value="AAP26588.1"/>
    <property type="molecule type" value="Genomic_DNA"/>
</dbReference>
<dbReference type="EMBL" id="AE017334">
    <property type="protein sequence ID" value="AAT31868.1"/>
    <property type="molecule type" value="Genomic_DNA"/>
</dbReference>
<dbReference type="EMBL" id="AE017225">
    <property type="protein sequence ID" value="AAT54876.1"/>
    <property type="molecule type" value="Genomic_DNA"/>
</dbReference>
<dbReference type="RefSeq" id="NP_845102.1">
    <property type="nucleotide sequence ID" value="NC_003997.3"/>
</dbReference>
<dbReference type="RefSeq" id="WP_000858199.1">
    <property type="nucleotide sequence ID" value="NZ_WXXJ01000026.1"/>
</dbReference>
<dbReference type="RefSeq" id="YP_028825.1">
    <property type="nucleotide sequence ID" value="NC_005945.1"/>
</dbReference>
<dbReference type="PDB" id="4CO9">
    <property type="method" value="X-ray"/>
    <property type="resolution" value="1.95 A"/>
    <property type="chains" value="A/B/C/D=1-209"/>
</dbReference>
<dbReference type="PDB" id="4CZ1">
    <property type="method" value="X-ray"/>
    <property type="resolution" value="2.24 A"/>
    <property type="chains" value="A/B/C/D=1-209"/>
</dbReference>
<dbReference type="PDBsum" id="4CO9"/>
<dbReference type="PDBsum" id="4CZ1"/>
<dbReference type="SMR" id="Q81PP9"/>
<dbReference type="STRING" id="261594.GBAA_2752"/>
<dbReference type="DNASU" id="1087435"/>
<dbReference type="GeneID" id="45022594"/>
<dbReference type="KEGG" id="ban:BA_2752"/>
<dbReference type="KEGG" id="banh:HYU01_13650"/>
<dbReference type="KEGG" id="bar:GBAA_2752"/>
<dbReference type="KEGG" id="bat:BAS2566"/>
<dbReference type="PATRIC" id="fig|198094.11.peg.2736"/>
<dbReference type="eggNOG" id="COG1878">
    <property type="taxonomic scope" value="Bacteria"/>
</dbReference>
<dbReference type="HOGENOM" id="CLU_030671_3_1_9"/>
<dbReference type="OMA" id="LHYRADG"/>
<dbReference type="OrthoDB" id="9796085at2"/>
<dbReference type="BRENDA" id="3.5.1.9">
    <property type="organism ID" value="634"/>
</dbReference>
<dbReference type="UniPathway" id="UPA00333">
    <property type="reaction ID" value="UER00454"/>
</dbReference>
<dbReference type="EvolutionaryTrace" id="Q81PP9"/>
<dbReference type="Proteomes" id="UP000000427">
    <property type="component" value="Chromosome"/>
</dbReference>
<dbReference type="Proteomes" id="UP000000594">
    <property type="component" value="Chromosome"/>
</dbReference>
<dbReference type="GO" id="GO:0004061">
    <property type="term" value="F:arylformamidase activity"/>
    <property type="evidence" value="ECO:0000314"/>
    <property type="project" value="UniProtKB"/>
</dbReference>
<dbReference type="GO" id="GO:0004328">
    <property type="term" value="F:formamidase activity"/>
    <property type="evidence" value="ECO:0007669"/>
    <property type="project" value="InterPro"/>
</dbReference>
<dbReference type="GO" id="GO:0008270">
    <property type="term" value="F:zinc ion binding"/>
    <property type="evidence" value="ECO:0000314"/>
    <property type="project" value="UniProtKB"/>
</dbReference>
<dbReference type="GO" id="GO:0043420">
    <property type="term" value="P:anthranilate metabolic process"/>
    <property type="evidence" value="ECO:0000317"/>
    <property type="project" value="UniProtKB"/>
</dbReference>
<dbReference type="GO" id="GO:0019441">
    <property type="term" value="P:L-tryptophan catabolic process to kynurenine"/>
    <property type="evidence" value="ECO:0000317"/>
    <property type="project" value="UniProtKB"/>
</dbReference>
<dbReference type="FunFam" id="3.50.30.50:FF:000001">
    <property type="entry name" value="Kynurenine formamidase"/>
    <property type="match status" value="1"/>
</dbReference>
<dbReference type="Gene3D" id="3.50.30.50">
    <property type="entry name" value="Putative cyclase"/>
    <property type="match status" value="1"/>
</dbReference>
<dbReference type="HAMAP" id="MF_01969">
    <property type="entry name" value="KynB"/>
    <property type="match status" value="1"/>
</dbReference>
<dbReference type="InterPro" id="IPR007325">
    <property type="entry name" value="KFase/CYL"/>
</dbReference>
<dbReference type="InterPro" id="IPR037175">
    <property type="entry name" value="KFase_sf"/>
</dbReference>
<dbReference type="InterPro" id="IPR017484">
    <property type="entry name" value="Kynurenine_formamidase_bac"/>
</dbReference>
<dbReference type="NCBIfam" id="TIGR03035">
    <property type="entry name" value="trp_arylform"/>
    <property type="match status" value="1"/>
</dbReference>
<dbReference type="PANTHER" id="PTHR31118">
    <property type="entry name" value="CYCLASE-LIKE PROTEIN 2"/>
    <property type="match status" value="1"/>
</dbReference>
<dbReference type="PANTHER" id="PTHR31118:SF32">
    <property type="entry name" value="KYNURENINE FORMAMIDASE"/>
    <property type="match status" value="1"/>
</dbReference>
<dbReference type="Pfam" id="PF04199">
    <property type="entry name" value="Cyclase"/>
    <property type="match status" value="1"/>
</dbReference>
<dbReference type="SUPFAM" id="SSF102198">
    <property type="entry name" value="Putative cyclase"/>
    <property type="match status" value="1"/>
</dbReference>
<name>KYNB_BACAN</name>
<feature type="chain" id="PRO_0000362088" description="Kynurenine formamidase">
    <location>
        <begin position="1"/>
        <end position="209"/>
    </location>
</feature>
<feature type="active site" description="Proton donor/acceptor" evidence="1 4">
    <location>
        <position position="60"/>
    </location>
</feature>
<feature type="binding site" evidence="2 6">
    <location>
        <position position="20"/>
    </location>
    <ligand>
        <name>substrate</name>
    </ligand>
</feature>
<feature type="binding site" evidence="1 2 5 6">
    <location>
        <position position="50"/>
    </location>
    <ligand>
        <name>Zn(2+)</name>
        <dbReference type="ChEBI" id="CHEBI:29105"/>
        <label>1</label>
    </ligand>
</feature>
<feature type="binding site" evidence="1 2 5 6">
    <location>
        <position position="54"/>
    </location>
    <ligand>
        <name>Zn(2+)</name>
        <dbReference type="ChEBI" id="CHEBI:29105"/>
        <label>1</label>
    </ligand>
</feature>
<feature type="binding site" evidence="1 2 5 6">
    <location>
        <position position="56"/>
    </location>
    <ligand>
        <name>Zn(2+)</name>
        <dbReference type="ChEBI" id="CHEBI:29105"/>
        <label>1</label>
    </ligand>
</feature>
<feature type="binding site" evidence="1 2 5 6">
    <location>
        <position position="56"/>
    </location>
    <ligand>
        <name>Zn(2+)</name>
        <dbReference type="ChEBI" id="CHEBI:29105"/>
        <label>2</label>
    </ligand>
</feature>
<feature type="binding site" evidence="1 2 5 6">
    <location>
        <position position="161"/>
    </location>
    <ligand>
        <name>Zn(2+)</name>
        <dbReference type="ChEBI" id="CHEBI:29105"/>
        <label>2</label>
    </ligand>
</feature>
<feature type="binding site" evidence="1 2 5 6">
    <location>
        <position position="173"/>
    </location>
    <ligand>
        <name>Zn(2+)</name>
        <dbReference type="ChEBI" id="CHEBI:29105"/>
        <label>1</label>
    </ligand>
</feature>
<feature type="binding site" evidence="1 2 5 6">
    <location>
        <position position="173"/>
    </location>
    <ligand>
        <name>Zn(2+)</name>
        <dbReference type="ChEBI" id="CHEBI:29105"/>
        <label>2</label>
    </ligand>
</feature>
<feature type="strand" evidence="7">
    <location>
        <begin position="27"/>
        <end position="32"/>
    </location>
</feature>
<feature type="helix" evidence="7">
    <location>
        <begin position="34"/>
        <end position="37"/>
    </location>
</feature>
<feature type="strand" evidence="7">
    <location>
        <begin position="42"/>
        <end position="56"/>
    </location>
</feature>
<feature type="helix" evidence="7">
    <location>
        <begin position="58"/>
        <end position="60"/>
    </location>
</feature>
<feature type="helix" evidence="7">
    <location>
        <begin position="68"/>
        <end position="70"/>
    </location>
</feature>
<feature type="helix" evidence="7">
    <location>
        <begin position="73"/>
        <end position="76"/>
    </location>
</feature>
<feature type="strand" evidence="7">
    <location>
        <begin position="77"/>
        <end position="84"/>
    </location>
</feature>
<feature type="strand" evidence="7">
    <location>
        <begin position="89"/>
        <end position="91"/>
    </location>
</feature>
<feature type="helix" evidence="7">
    <location>
        <begin position="93"/>
        <end position="96"/>
    </location>
</feature>
<feature type="strand" evidence="7">
    <location>
        <begin position="105"/>
        <end position="110"/>
    </location>
</feature>
<feature type="helix" evidence="7">
    <location>
        <begin position="131"/>
        <end position="138"/>
    </location>
</feature>
<feature type="strand" evidence="7">
    <location>
        <begin position="142"/>
        <end position="148"/>
    </location>
</feature>
<feature type="helix" evidence="7">
    <location>
        <begin position="159"/>
        <end position="166"/>
    </location>
</feature>
<feature type="strand" evidence="7">
    <location>
        <begin position="170"/>
        <end position="173"/>
    </location>
</feature>
<feature type="strand" evidence="7">
    <location>
        <begin position="182"/>
        <end position="188"/>
    </location>
</feature>
<feature type="strand" evidence="7">
    <location>
        <begin position="198"/>
        <end position="201"/>
    </location>
</feature>
<feature type="strand" evidence="7">
    <location>
        <begin position="205"/>
        <end position="208"/>
    </location>
</feature>
<evidence type="ECO:0000255" key="1">
    <source>
        <dbReference type="HAMAP-Rule" id="MF_01969"/>
    </source>
</evidence>
<evidence type="ECO:0000269" key="2">
    <source>
    </source>
</evidence>
<evidence type="ECO:0000303" key="3">
    <source>
    </source>
</evidence>
<evidence type="ECO:0000305" key="4">
    <source>
    </source>
</evidence>
<evidence type="ECO:0007744" key="5">
    <source>
        <dbReference type="PDB" id="4CO9"/>
    </source>
</evidence>
<evidence type="ECO:0007744" key="6">
    <source>
        <dbReference type="PDB" id="4CZ1"/>
    </source>
</evidence>
<evidence type="ECO:0007829" key="7">
    <source>
        <dbReference type="PDB" id="4CO9"/>
    </source>
</evidence>
<protein>
    <recommendedName>
        <fullName evidence="1 3">Kynurenine formamidase</fullName>
        <shortName evidence="1 3">KFA</shortName>
        <shortName evidence="1 3">KFase</shortName>
        <ecNumber evidence="1 2">3.5.1.9</ecNumber>
    </recommendedName>
    <alternativeName>
        <fullName evidence="1">Arylformamidase</fullName>
    </alternativeName>
    <alternativeName>
        <fullName evidence="1">N-formylkynurenine formamidase</fullName>
        <shortName evidence="1">FKF</shortName>
    </alternativeName>
</protein>
<accession>Q81PP9</accession>
<accession>Q6HXW3</accession>
<accession>Q6KRY5</accession>
<reference key="1">
    <citation type="journal article" date="2003" name="Nature">
        <title>The genome sequence of Bacillus anthracis Ames and comparison to closely related bacteria.</title>
        <authorList>
            <person name="Read T.D."/>
            <person name="Peterson S.N."/>
            <person name="Tourasse N.J."/>
            <person name="Baillie L.W."/>
            <person name="Paulsen I.T."/>
            <person name="Nelson K.E."/>
            <person name="Tettelin H."/>
            <person name="Fouts D.E."/>
            <person name="Eisen J.A."/>
            <person name="Gill S.R."/>
            <person name="Holtzapple E.K."/>
            <person name="Okstad O.A."/>
            <person name="Helgason E."/>
            <person name="Rilstone J."/>
            <person name="Wu M."/>
            <person name="Kolonay J.F."/>
            <person name="Beanan M.J."/>
            <person name="Dodson R.J."/>
            <person name="Brinkac L.M."/>
            <person name="Gwinn M.L."/>
            <person name="DeBoy R.T."/>
            <person name="Madpu R."/>
            <person name="Daugherty S.C."/>
            <person name="Durkin A.S."/>
            <person name="Haft D.H."/>
            <person name="Nelson W.C."/>
            <person name="Peterson J.D."/>
            <person name="Pop M."/>
            <person name="Khouri H.M."/>
            <person name="Radune D."/>
            <person name="Benton J.L."/>
            <person name="Mahamoud Y."/>
            <person name="Jiang L."/>
            <person name="Hance I.R."/>
            <person name="Weidman J.F."/>
            <person name="Berry K.J."/>
            <person name="Plaut R.D."/>
            <person name="Wolf A.M."/>
            <person name="Watkins K.L."/>
            <person name="Nierman W.C."/>
            <person name="Hazen A."/>
            <person name="Cline R.T."/>
            <person name="Redmond C."/>
            <person name="Thwaite J.E."/>
            <person name="White O."/>
            <person name="Salzberg S.L."/>
            <person name="Thomason B."/>
            <person name="Friedlander A.M."/>
            <person name="Koehler T.M."/>
            <person name="Hanna P.C."/>
            <person name="Kolstoe A.-B."/>
            <person name="Fraser C.M."/>
        </authorList>
    </citation>
    <scope>NUCLEOTIDE SEQUENCE [LARGE SCALE GENOMIC DNA]</scope>
    <source>
        <strain>Ames / isolate Porton</strain>
    </source>
</reference>
<reference key="2">
    <citation type="submission" date="2004-01" db="EMBL/GenBank/DDBJ databases">
        <title>Complete genome sequence of Bacillus anthracis Sterne.</title>
        <authorList>
            <person name="Brettin T.S."/>
            <person name="Bruce D."/>
            <person name="Challacombe J.F."/>
            <person name="Gilna P."/>
            <person name="Han C."/>
            <person name="Hill K."/>
            <person name="Hitchcock P."/>
            <person name="Jackson P."/>
            <person name="Keim P."/>
            <person name="Longmire J."/>
            <person name="Lucas S."/>
            <person name="Okinaka R."/>
            <person name="Richardson P."/>
            <person name="Rubin E."/>
            <person name="Tice H."/>
        </authorList>
    </citation>
    <scope>NUCLEOTIDE SEQUENCE [LARGE SCALE GENOMIC DNA]</scope>
    <source>
        <strain>Sterne</strain>
    </source>
</reference>
<reference key="3">
    <citation type="journal article" date="2009" name="J. Bacteriol.">
        <title>The complete genome sequence of Bacillus anthracis Ames 'Ancestor'.</title>
        <authorList>
            <person name="Ravel J."/>
            <person name="Jiang L."/>
            <person name="Stanley S.T."/>
            <person name="Wilson M.R."/>
            <person name="Decker R.S."/>
            <person name="Read T.D."/>
            <person name="Worsham P."/>
            <person name="Keim P.S."/>
            <person name="Salzberg S.L."/>
            <person name="Fraser-Liggett C.M."/>
            <person name="Rasko D.A."/>
        </authorList>
    </citation>
    <scope>NUCLEOTIDE SEQUENCE [LARGE SCALE GENOMIC DNA]</scope>
    <source>
        <strain>Ames ancestor</strain>
    </source>
</reference>
<reference key="4">
    <citation type="journal article" date="2014" name="Biochem. J.">
        <title>Structures of bacterial kynurenine formamidase reveal a crowded binuclear zinc catalytic site primed to generate a potent nucleophile.</title>
        <authorList>
            <person name="Diaz-Saez L."/>
            <person name="Srikannathasan V."/>
            <person name="Zoltner M."/>
            <person name="Hunter W.N."/>
        </authorList>
    </citation>
    <scope>X-RAY CRYSTALLOGRAPHY (1.95 ANGSTROMS) IN COMPLEX WITH SUBSTRATE ANALOG AND ZINC IONS</scope>
    <scope>FUNCTION</scope>
    <scope>CATALYTIC ACTIVITY</scope>
    <scope>BIOPHYSICOCHEMICAL PROPERTIES</scope>
    <scope>COFACTOR</scope>
    <scope>ACTIVE SITE</scope>
    <scope>SUBUNIT</scope>
</reference>
<keyword id="KW-0002">3D-structure</keyword>
<keyword id="KW-0378">Hydrolase</keyword>
<keyword id="KW-0479">Metal-binding</keyword>
<keyword id="KW-1185">Reference proteome</keyword>
<keyword id="KW-0823">Tryptophan catabolism</keyword>
<keyword id="KW-0862">Zinc</keyword>
<comment type="function">
    <text evidence="1 2">Catalyzes the hydrolysis of N-formyl-L-kynurenine to L-kynurenine, the second step in the kynurenine pathway of tryptophan degradation.</text>
</comment>
<comment type="catalytic activity">
    <reaction evidence="1 2">
        <text>N-formyl-L-kynurenine + H2O = L-kynurenine + formate + H(+)</text>
        <dbReference type="Rhea" id="RHEA:13009"/>
        <dbReference type="ChEBI" id="CHEBI:15377"/>
        <dbReference type="ChEBI" id="CHEBI:15378"/>
        <dbReference type="ChEBI" id="CHEBI:15740"/>
        <dbReference type="ChEBI" id="CHEBI:57959"/>
        <dbReference type="ChEBI" id="CHEBI:58629"/>
        <dbReference type="EC" id="3.5.1.9"/>
    </reaction>
</comment>
<comment type="cofactor">
    <cofactor evidence="1 2">
        <name>Zn(2+)</name>
        <dbReference type="ChEBI" id="CHEBI:29105"/>
    </cofactor>
    <text evidence="1 2">Binds 2 zinc ions per subunit.</text>
</comment>
<comment type="biophysicochemical properties">
    <kinetics>
        <KM evidence="2">0.4 mM for N-formyl-L-kynurenine</KM>
        <Vmax evidence="2">65.41 nmol/min/mg enzyme</Vmax>
        <text evidence="2">kcat is 50.56 sec(-1) for N-formyl-L-kynurenine as substrate.</text>
    </kinetics>
</comment>
<comment type="pathway">
    <text evidence="1">Amino-acid degradation; L-tryptophan degradation via kynurenine pathway; L-kynurenine from L-tryptophan: step 2/2.</text>
</comment>
<comment type="subunit">
    <text evidence="1 2">Homodimer.</text>
</comment>
<comment type="similarity">
    <text evidence="1">Belongs to the Cyclase 1 superfamily. KynB family.</text>
</comment>
<organism>
    <name type="scientific">Bacillus anthracis</name>
    <dbReference type="NCBI Taxonomy" id="1392"/>
    <lineage>
        <taxon>Bacteria</taxon>
        <taxon>Bacillati</taxon>
        <taxon>Bacillota</taxon>
        <taxon>Bacilli</taxon>
        <taxon>Bacillales</taxon>
        <taxon>Bacillaceae</taxon>
        <taxon>Bacillus</taxon>
        <taxon>Bacillus cereus group</taxon>
    </lineage>
</organism>
<gene>
    <name evidence="1" type="primary">kynB</name>
    <name type="ordered locus">BA_2752</name>
    <name type="ordered locus">GBAA_2752</name>
    <name type="ordered locus">BAS2566</name>
</gene>